<sequence length="739" mass="82441">MPFPVTTQGSQQTQPPQKHYGITSPISLAAPKETDCLLTQKLVETLKPFGVFEEEEELQRRILILGKLNNLVKEWIREISESKNLPQSVIENVGGKIFTFGSYRLGVHTKGADIDALCVAPRHVDRSDFFTSFYDKLKLQEEVKDLRAVEEAFVPVIKLCFDGIEIDILFARLALQTIPEDLDLRDDSLLKNLDIRCIRSLNGCRVTDEILHLVPNIDNFRLTLRAIKLWAKRHNIYSNILGFLGGVSWAMLVARTCQLYPNAIASTLVHKFFLVFSKWEWPNPVLLKQPEECNLNLPVWDPRVNPSDRYHLMPIITPAYPQQNSTYNVSVSTRMVMVEEFKQGLAITDEILLSKAEWSKLFEAPNFFQKYKHYIVLLASAPTEKQRLEWVGLVESKIRILVGSLEKNEFITLAHVNPQSFPAPKENPDKEEFRTMWVIGLVFKKTENSENLSVDLTYDIQSFTDTVYRQAINSKMFEVDMKIAAMHVKRKQLHQLLPSHVLQKKKKHSTEGVKLTPLNDSSLDLSMDSDNSMSVPSPTSAMKTSPLNSSGSSQGRNSPAPAVTAASVTNIQATEVSLPQINSSESSGGTSSESIPQTATQPAISSPPKPTVSRVVSSTRLVNPPPRPSGNAAAKIPNPIVGVKRTSSPHKEESPKKTKTEEDETSEDANCLALSGHDKTETKEQLDTETSTTQSETIQTATSLLASQKTSSTDLSDIPALPANPIPVIKNSIKLRLNR</sequence>
<comment type="function">
    <text evidence="2 9">Polymerase that creates the 3'-poly(A) tail of mRNA's. Also required for the endoribonucleolytic cleavage reaction at some polyadenylation sites. May acquire specificity through interaction with a cleavage and polyadenylation specificity factor (CPSF) at its C-terminus.</text>
</comment>
<comment type="catalytic activity">
    <reaction evidence="6">
        <text>RNA(n) + ATP = RNA(n)-3'-adenine ribonucleotide + diphosphate</text>
        <dbReference type="Rhea" id="RHEA:11332"/>
        <dbReference type="Rhea" id="RHEA-COMP:14527"/>
        <dbReference type="Rhea" id="RHEA-COMP:17347"/>
        <dbReference type="ChEBI" id="CHEBI:30616"/>
        <dbReference type="ChEBI" id="CHEBI:33019"/>
        <dbReference type="ChEBI" id="CHEBI:140395"/>
        <dbReference type="ChEBI" id="CHEBI:173115"/>
        <dbReference type="EC" id="2.7.7.19"/>
    </reaction>
</comment>
<comment type="cofactor">
    <cofactor evidence="6">
        <name>Mg(2+)</name>
        <dbReference type="ChEBI" id="CHEBI:18420"/>
    </cofactor>
    <cofactor evidence="6">
        <name>Mn(2+)</name>
        <dbReference type="ChEBI" id="CHEBI:29035"/>
    </cofactor>
    <text evidence="6">Binds 2 magnesium ions. Also active with manganese.</text>
</comment>
<comment type="biophysicochemical properties">
    <kinetics>
        <KM evidence="6">0.229 mM for ATP</KM>
    </kinetics>
</comment>
<comment type="subunit">
    <text evidence="2 3 5 6 7">Monomer (PubMed:10944102, PubMed:15328606). Found in a complex with CPSF1, FIP1L1 and PAPOLA. Interacts with AHCYL1 and FIP1L1; the interaction with AHCYL1 seems to increase interaction with FIP1L1 (By similarity). Interacts with NUDT21; the interaction is diminished by acetylation (PubMed:17172643). Interacts with KPNB1; the interaction promotes PAP nuclear import and is inhibited by acetylation of PAP (PubMed:17172643).</text>
</comment>
<comment type="subcellular location">
    <subcellularLocation>
        <location evidence="7">Nucleus</location>
    </subcellularLocation>
</comment>
<comment type="alternative products">
    <event type="alternative splicing"/>
    <isoform>
        <id>P25500-1</id>
        <name>Long</name>
        <sequence type="displayed"/>
    </isoform>
    <isoform>
        <id>P25500-2</id>
        <name>Short</name>
        <sequence type="described" ref="VSP_004524 VSP_004525 VSP_004526"/>
    </isoform>
    <text>Additional isoforms seem to exist.</text>
</comment>
<comment type="PTM">
    <text evidence="1">Polysumoylated. Varying sumoylation depending on tissue- and cell-type. Highly sumoylated in bladder and NIH 3T3 cells. Sumoylation is required for nuclear localization and enhances PAP stability. Desumoylated by SENP1. Inhibits polymerase activity (By similarity).</text>
</comment>
<comment type="PTM">
    <text evidence="1">Hyperphosphorylation on multiple CDK2 consensus and non-consensus sites in the C-terminal Ser/Thr-rich region represses PAP activity in late M-phase. Phosphorylation/dephosphorylation may regulate the interaction between PAP and CPSF (By similarity).</text>
</comment>
<comment type="PTM">
    <text evidence="7">Acetylated in the C-terminus. Acetylation decreases interaction with NUDT21 and KPNB1, and inhibits nuclear localization through inhibiting binding to the importin alpha/beta complex.</text>
</comment>
<comment type="similarity">
    <text evidence="11">Belongs to the poly(A) polymerase family.</text>
</comment>
<protein>
    <recommendedName>
        <fullName>Poly(A) polymerase alpha</fullName>
        <shortName>PAP-alpha</shortName>
        <ecNumber>2.7.7.19</ecNumber>
    </recommendedName>
    <alternativeName>
        <fullName>Polynucleotide adenylyltransferase alpha</fullName>
    </alternativeName>
</protein>
<accession>P25500</accession>
<organism>
    <name type="scientific">Bos taurus</name>
    <name type="common">Bovine</name>
    <dbReference type="NCBI Taxonomy" id="9913"/>
    <lineage>
        <taxon>Eukaryota</taxon>
        <taxon>Metazoa</taxon>
        <taxon>Chordata</taxon>
        <taxon>Craniata</taxon>
        <taxon>Vertebrata</taxon>
        <taxon>Euteleostomi</taxon>
        <taxon>Mammalia</taxon>
        <taxon>Eutheria</taxon>
        <taxon>Laurasiatheria</taxon>
        <taxon>Artiodactyla</taxon>
        <taxon>Ruminantia</taxon>
        <taxon>Pecora</taxon>
        <taxon>Bovidae</taxon>
        <taxon>Bovinae</taxon>
        <taxon>Bos</taxon>
    </lineage>
</organism>
<name>PAPOA_BOVIN</name>
<gene>
    <name type="primary">PAPOLA</name>
    <name type="synonym">PAP</name>
</gene>
<dbReference type="EC" id="2.7.7.19"/>
<dbReference type="EMBL" id="X61585">
    <property type="protein sequence ID" value="CAA43782.1"/>
    <property type="molecule type" value="mRNA"/>
</dbReference>
<dbReference type="EMBL" id="X63436">
    <property type="protein sequence ID" value="CAA45031.1"/>
    <property type="molecule type" value="mRNA"/>
</dbReference>
<dbReference type="PIR" id="S17875">
    <property type="entry name" value="S17875"/>
</dbReference>
<dbReference type="PIR" id="S17925">
    <property type="entry name" value="S17925"/>
</dbReference>
<dbReference type="PIR" id="S18642">
    <property type="entry name" value="S18642"/>
</dbReference>
<dbReference type="RefSeq" id="NP_788820.1">
    <molecule id="P25500-1"/>
    <property type="nucleotide sequence ID" value="NM_176647.2"/>
</dbReference>
<dbReference type="PDB" id="1F5A">
    <property type="method" value="X-ray"/>
    <property type="resolution" value="2.50 A"/>
    <property type="chains" value="A=1-513"/>
</dbReference>
<dbReference type="PDB" id="1Q78">
    <property type="method" value="X-ray"/>
    <property type="resolution" value="2.80 A"/>
    <property type="chains" value="A=1-514"/>
</dbReference>
<dbReference type="PDB" id="1Q79">
    <property type="method" value="X-ray"/>
    <property type="resolution" value="2.15 A"/>
    <property type="chains" value="A=1-514"/>
</dbReference>
<dbReference type="PDBsum" id="1F5A"/>
<dbReference type="PDBsum" id="1Q78"/>
<dbReference type="PDBsum" id="1Q79"/>
<dbReference type="SMR" id="P25500"/>
<dbReference type="FunCoup" id="P25500">
    <property type="interactions" value="5137"/>
</dbReference>
<dbReference type="STRING" id="9913.ENSBTAP00000070125"/>
<dbReference type="iPTMnet" id="P25500"/>
<dbReference type="PaxDb" id="9913-ENSBTAP00000005300"/>
<dbReference type="Ensembl" id="ENSBTAT00000063150.3">
    <molecule id="P25500-1"/>
    <property type="protein sequence ID" value="ENSBTAP00000054531.2"/>
    <property type="gene ID" value="ENSBTAG00000004054.7"/>
</dbReference>
<dbReference type="Ensembl" id="ENSBTAT00000070614.2">
    <molecule id="P25500-2"/>
    <property type="protein sequence ID" value="ENSBTAP00000070125.2"/>
    <property type="gene ID" value="ENSBTAG00000004054.7"/>
</dbReference>
<dbReference type="GeneID" id="338051"/>
<dbReference type="KEGG" id="bta:338051"/>
<dbReference type="CTD" id="10914"/>
<dbReference type="VEuPathDB" id="HostDB:ENSBTAG00000004054"/>
<dbReference type="eggNOG" id="KOG2245">
    <property type="taxonomic scope" value="Eukaryota"/>
</dbReference>
<dbReference type="GeneTree" id="ENSGT00940000154598"/>
<dbReference type="InParanoid" id="P25500"/>
<dbReference type="OrthoDB" id="412748at2759"/>
<dbReference type="TreeFam" id="TF300842"/>
<dbReference type="BRENDA" id="2.7.7.19">
    <property type="organism ID" value="908"/>
</dbReference>
<dbReference type="Reactome" id="R-BTA-72187">
    <property type="pathway name" value="mRNA 3'-end processing"/>
</dbReference>
<dbReference type="Reactome" id="R-BTA-72203">
    <property type="pathway name" value="Processing of Capped Intron-Containing Pre-mRNA"/>
</dbReference>
<dbReference type="Reactome" id="R-BTA-73856">
    <property type="pathway name" value="RNA Polymerase II Transcription Termination"/>
</dbReference>
<dbReference type="Reactome" id="R-BTA-77595">
    <property type="pathway name" value="Processing of Intronless Pre-mRNAs"/>
</dbReference>
<dbReference type="SABIO-RK" id="P25500"/>
<dbReference type="EvolutionaryTrace" id="P25500"/>
<dbReference type="Proteomes" id="UP000009136">
    <property type="component" value="Chromosome 21"/>
</dbReference>
<dbReference type="Bgee" id="ENSBTAG00000004054">
    <property type="expression patterns" value="Expressed in thymus and 107 other cell types or tissues"/>
</dbReference>
<dbReference type="GO" id="GO:0005654">
    <property type="term" value="C:nucleoplasm"/>
    <property type="evidence" value="ECO:0007669"/>
    <property type="project" value="Ensembl"/>
</dbReference>
<dbReference type="GO" id="GO:0005634">
    <property type="term" value="C:nucleus"/>
    <property type="evidence" value="ECO:0000318"/>
    <property type="project" value="GO_Central"/>
</dbReference>
<dbReference type="GO" id="GO:0005524">
    <property type="term" value="F:ATP binding"/>
    <property type="evidence" value="ECO:0000314"/>
    <property type="project" value="UniProtKB"/>
</dbReference>
<dbReference type="GO" id="GO:0000287">
    <property type="term" value="F:magnesium ion binding"/>
    <property type="evidence" value="ECO:0000314"/>
    <property type="project" value="UniProtKB"/>
</dbReference>
<dbReference type="GO" id="GO:0030145">
    <property type="term" value="F:manganese ion binding"/>
    <property type="evidence" value="ECO:0000314"/>
    <property type="project" value="UniProtKB"/>
</dbReference>
<dbReference type="GO" id="GO:1990817">
    <property type="term" value="F:poly(A) RNA polymerase activity"/>
    <property type="evidence" value="ECO:0000314"/>
    <property type="project" value="UniProtKB"/>
</dbReference>
<dbReference type="GO" id="GO:0003723">
    <property type="term" value="F:RNA binding"/>
    <property type="evidence" value="ECO:0007669"/>
    <property type="project" value="UniProtKB-KW"/>
</dbReference>
<dbReference type="GO" id="GO:0180010">
    <property type="term" value="P:co-transcriptional mRNA 3'-end processing, cleavage and polyadenylation pathway"/>
    <property type="evidence" value="ECO:0000250"/>
    <property type="project" value="UniProtKB"/>
</dbReference>
<dbReference type="GO" id="GO:0180011">
    <property type="term" value="P:cytosolic mRNA polyadenylation"/>
    <property type="evidence" value="ECO:0007669"/>
    <property type="project" value="Ensembl"/>
</dbReference>
<dbReference type="CDD" id="cd05402">
    <property type="entry name" value="NT_PAP_TUTase"/>
    <property type="match status" value="1"/>
</dbReference>
<dbReference type="FunFam" id="3.30.460.10:FF:000002">
    <property type="entry name" value="Poly(A) polymerase alpha, putative"/>
    <property type="match status" value="1"/>
</dbReference>
<dbReference type="FunFam" id="1.10.1410.10:FF:000001">
    <property type="entry name" value="Putative poly(A) polymerase gamma"/>
    <property type="match status" value="1"/>
</dbReference>
<dbReference type="FunFam" id="3.30.70.590:FF:000001">
    <property type="entry name" value="Putative poly(A) polymerase gamma"/>
    <property type="match status" value="1"/>
</dbReference>
<dbReference type="Gene3D" id="1.10.1410.10">
    <property type="match status" value="1"/>
</dbReference>
<dbReference type="Gene3D" id="3.30.460.10">
    <property type="entry name" value="Beta Polymerase, domain 2"/>
    <property type="match status" value="1"/>
</dbReference>
<dbReference type="Gene3D" id="3.30.70.590">
    <property type="entry name" value="Poly(A) polymerase predicted RNA binding domain"/>
    <property type="match status" value="1"/>
</dbReference>
<dbReference type="InterPro" id="IPR043519">
    <property type="entry name" value="NT_sf"/>
</dbReference>
<dbReference type="InterPro" id="IPR011068">
    <property type="entry name" value="NuclTrfase_I-like_C"/>
</dbReference>
<dbReference type="InterPro" id="IPR007012">
    <property type="entry name" value="PolA_pol_cen_dom"/>
</dbReference>
<dbReference type="InterPro" id="IPR048840">
    <property type="entry name" value="PolA_pol_NTPase"/>
</dbReference>
<dbReference type="InterPro" id="IPR007010">
    <property type="entry name" value="PolA_pol_RNA-bd_dom"/>
</dbReference>
<dbReference type="InterPro" id="IPR014492">
    <property type="entry name" value="PolyA_polymerase"/>
</dbReference>
<dbReference type="PANTHER" id="PTHR10682">
    <property type="entry name" value="POLY A POLYMERASE"/>
    <property type="match status" value="1"/>
</dbReference>
<dbReference type="PANTHER" id="PTHR10682:SF9">
    <property type="entry name" value="POLY(A) POLYMERASE ALPHA"/>
    <property type="match status" value="1"/>
</dbReference>
<dbReference type="Pfam" id="PF04928">
    <property type="entry name" value="PAP_central"/>
    <property type="match status" value="1"/>
</dbReference>
<dbReference type="Pfam" id="PF20750">
    <property type="entry name" value="PAP_NTPase"/>
    <property type="match status" value="1"/>
</dbReference>
<dbReference type="Pfam" id="PF04926">
    <property type="entry name" value="PAP_RNA-bind"/>
    <property type="match status" value="2"/>
</dbReference>
<dbReference type="PIRSF" id="PIRSF018425">
    <property type="entry name" value="PolyA_polymerase"/>
    <property type="match status" value="1"/>
</dbReference>
<dbReference type="SUPFAM" id="SSF81301">
    <property type="entry name" value="Nucleotidyltransferase"/>
    <property type="match status" value="1"/>
</dbReference>
<dbReference type="SUPFAM" id="SSF55003">
    <property type="entry name" value="PAP/Archaeal CCA-adding enzyme, C-terminal domain"/>
    <property type="match status" value="1"/>
</dbReference>
<dbReference type="SUPFAM" id="SSF81631">
    <property type="entry name" value="PAP/OAS1 substrate-binding domain"/>
    <property type="match status" value="1"/>
</dbReference>
<proteinExistence type="evidence at protein level"/>
<reference key="1">
    <citation type="journal article" date="1991" name="EMBO J.">
        <title>Isolation and expression of cDNA clones encoding mammalian poly(A) polymerase.</title>
        <authorList>
            <person name="Wahle E."/>
            <person name="Martin G."/>
            <person name="Schiltz E."/>
            <person name="Keller W."/>
        </authorList>
    </citation>
    <scope>NUCLEOTIDE SEQUENCE [MRNA] (ISOFORMS LONG AND SHORT)</scope>
    <scope>PROTEIN SEQUENCE OF 1-21; 207-255 AND 386-397</scope>
    <source>
        <tissue>Thymus</tissue>
    </source>
</reference>
<reference key="2">
    <citation type="submission" date="1992-08" db="EMBL/GenBank/DDBJ databases">
        <authorList>
            <person name="Wahle E."/>
        </authorList>
    </citation>
    <scope>SEQUENCE REVISION</scope>
</reference>
<reference key="3">
    <citation type="journal article" date="1991" name="Nature">
        <title>Primary structure and expression of bovine poly(A) polymerase.</title>
        <authorList>
            <person name="Raabe T."/>
            <person name="Bollum F.J."/>
            <person name="Manley J.L."/>
        </authorList>
    </citation>
    <scope>NUCLEOTIDE SEQUENCE [MRNA]</scope>
    <scope>PROTEIN SEQUENCE OF 97-103 AND 445-468</scope>
    <source>
        <tissue>Heart muscle</tissue>
    </source>
</reference>
<reference key="4">
    <citation type="journal article" date="1996" name="EMBO J.">
        <title>Mutational analysis of mammalian poly(A) polymerase identifies a region for primer binding and catalytic domain, homologous to the family X polymerases, and to other nucleotidyltransferases.</title>
        <authorList>
            <person name="Martin G."/>
            <person name="Keller W."/>
        </authorList>
    </citation>
    <scope>DOMAINS</scope>
    <scope>MUTAGENESIS OF ASP-113; ASP-115; 162-ASP-GLY-163; ASP-167; ASP-186; ASP-194; ASP-208; GLU-209; GLU-291; GLU-292; 431-GLU-GLU-432; ASP-455; ASP-459 AND ASP-465</scope>
</reference>
<reference key="5">
    <citation type="journal article" date="1998" name="EMBO J.">
        <title>Inhibition of poly(A) polymerase requires p34cdc2/cyclin B phosphorylation of multiple consensus and non-consensus sites.</title>
        <authorList>
            <person name="Colgan D.F."/>
            <person name="Murthy K.G."/>
            <person name="Zhao W."/>
            <person name="Prives C."/>
            <person name="Manley J.L."/>
        </authorList>
    </citation>
    <scope>PHOSPHORYLATION</scope>
    <scope>FUNCTION</scope>
</reference>
<reference key="6">
    <citation type="journal article" date="2007" name="J. Biol. Chem.">
        <title>Multiple histone deacetylases and the CREB-binding protein regulate pre-mRNA 3'-end processing.</title>
        <authorList>
            <person name="Shimazu T."/>
            <person name="Horinouchi S."/>
            <person name="Yoshida M."/>
        </authorList>
    </citation>
    <scope>ACETYLATION AT LYS-635; LYS-644; LYS-730 AND LYS-734</scope>
    <scope>INTERACTION WITH NUDT21 AND KPBN1</scope>
    <scope>SUBCELLULAR LOCATION</scope>
    <scope>IDENTIFICATION BY MASS SPECTROMETRY</scope>
    <scope>MUTAGENESIS OF LYS-635; LYS-644; LYS-730 AND LYS-734</scope>
</reference>
<reference key="7">
    <citation type="journal article" date="2000" name="EMBO J.">
        <title>Crystal structure of mammalian poly(A) polymerase in complex with an analog of ATP.</title>
        <authorList>
            <person name="Martin G."/>
            <person name="Keller W."/>
            <person name="Doublie S."/>
        </authorList>
    </citation>
    <scope>X-RAY CRYSTALLOGRAPHY (2.5 ANGSTROMS) OF 1-513 IN COMPLEX WITH ATP ANALOG AND MANGANESE IONS</scope>
</reference>
<reference key="8">
    <citation type="journal article" date="2004" name="J. Mol. Biol.">
        <title>Biochemical and structural insights into substrate binding and catalytic mechanism of mammalian poly(A) polymerase.</title>
        <authorList>
            <person name="Martin G."/>
            <person name="Moglich A."/>
            <person name="Keller W."/>
            <person name="Doublie S."/>
        </authorList>
    </citation>
    <scope>X-RAY CRYSTALLOGRAPHY (2.15 ANGSTROMS) OF 1-513 IN COMPLEX WITH MAGNESIUM IONS; MANGANESE IONS AND ATP ANALOG</scope>
    <scope>BIOPHYSICOCHEMICAL PROPERTIES</scope>
    <scope>CATALYTIC ACTIVITY</scope>
    <scope>COFACTOR</scope>
    <scope>MUTAGENESIS OF PHE-100; PHE-153; VAL-156; ASP-167; ARG-199; ASN-202; GLY-203; LYS-228; LYS-232; TYR-237 AND VAL-247</scope>
</reference>
<feature type="chain" id="PRO_0000051611" description="Poly(A) polymerase alpha">
    <location>
        <begin position="1"/>
        <end position="739"/>
    </location>
</feature>
<feature type="region of interest" description="Disordered" evidence="4">
    <location>
        <begin position="1"/>
        <end position="23"/>
    </location>
</feature>
<feature type="region of interest" description="Disordered" evidence="4">
    <location>
        <begin position="501"/>
        <end position="565"/>
    </location>
</feature>
<feature type="region of interest" description="Ser/Thr-rich">
    <location>
        <begin position="508"/>
        <end position="643"/>
    </location>
</feature>
<feature type="region of interest" description="Disordered" evidence="4">
    <location>
        <begin position="580"/>
        <end position="700"/>
    </location>
</feature>
<feature type="region of interest" description="Required for interaction with NUDT21" evidence="7">
    <location>
        <begin position="671"/>
        <end position="739"/>
    </location>
</feature>
<feature type="short sequence motif" description="Nuclear localization signal 1">
    <location>
        <begin position="490"/>
        <end position="507"/>
    </location>
</feature>
<feature type="short sequence motif" description="Nuclear localization signal 2">
    <location>
        <begin position="644"/>
        <end position="659"/>
    </location>
</feature>
<feature type="compositionally biased region" description="Low complexity" evidence="4">
    <location>
        <begin position="1"/>
        <end position="17"/>
    </location>
</feature>
<feature type="compositionally biased region" description="Low complexity" evidence="4">
    <location>
        <begin position="518"/>
        <end position="534"/>
    </location>
</feature>
<feature type="compositionally biased region" description="Polar residues" evidence="4">
    <location>
        <begin position="535"/>
        <end position="557"/>
    </location>
</feature>
<feature type="compositionally biased region" description="Low complexity" evidence="4">
    <location>
        <begin position="583"/>
        <end position="594"/>
    </location>
</feature>
<feature type="compositionally biased region" description="Polar residues" evidence="4">
    <location>
        <begin position="595"/>
        <end position="604"/>
    </location>
</feature>
<feature type="compositionally biased region" description="Low complexity" evidence="4">
    <location>
        <begin position="611"/>
        <end position="620"/>
    </location>
</feature>
<feature type="compositionally biased region" description="Basic and acidic residues" evidence="4">
    <location>
        <begin position="649"/>
        <end position="660"/>
    </location>
</feature>
<feature type="compositionally biased region" description="Basic and acidic residues" evidence="4">
    <location>
        <begin position="676"/>
        <end position="686"/>
    </location>
</feature>
<feature type="compositionally biased region" description="Low complexity" evidence="4">
    <location>
        <begin position="688"/>
        <end position="700"/>
    </location>
</feature>
<feature type="binding site">
    <location>
        <begin position="100"/>
        <end position="102"/>
    </location>
    <ligand>
        <name>ATP</name>
        <dbReference type="ChEBI" id="CHEBI:30616"/>
    </ligand>
</feature>
<feature type="binding site">
    <location>
        <position position="109"/>
    </location>
    <ligand>
        <name>ATP</name>
        <dbReference type="ChEBI" id="CHEBI:30616"/>
    </ligand>
</feature>
<feature type="binding site">
    <location>
        <begin position="113"/>
        <end position="115"/>
    </location>
    <ligand>
        <name>ATP</name>
        <dbReference type="ChEBI" id="CHEBI:30616"/>
    </ligand>
</feature>
<feature type="binding site">
    <location>
        <position position="113"/>
    </location>
    <ligand>
        <name>Mg(2+)</name>
        <dbReference type="ChEBI" id="CHEBI:18420"/>
        <label>1</label>
        <note>catalytic</note>
    </ligand>
</feature>
<feature type="binding site">
    <location>
        <position position="113"/>
    </location>
    <ligand>
        <name>Mg(2+)</name>
        <dbReference type="ChEBI" id="CHEBI:18420"/>
        <label>2</label>
        <note>catalytic</note>
    </ligand>
</feature>
<feature type="binding site">
    <location>
        <position position="115"/>
    </location>
    <ligand>
        <name>Mg(2+)</name>
        <dbReference type="ChEBI" id="CHEBI:18420"/>
        <label>1</label>
        <note>catalytic</note>
    </ligand>
</feature>
<feature type="binding site">
    <location>
        <position position="115"/>
    </location>
    <ligand>
        <name>Mg(2+)</name>
        <dbReference type="ChEBI" id="CHEBI:18420"/>
        <label>2</label>
        <note>catalytic</note>
    </ligand>
</feature>
<feature type="binding site">
    <location>
        <position position="167"/>
    </location>
    <ligand>
        <name>ATP</name>
        <dbReference type="ChEBI" id="CHEBI:30616"/>
    </ligand>
</feature>
<feature type="binding site">
    <location>
        <position position="167"/>
    </location>
    <ligand>
        <name>Mg(2+)</name>
        <dbReference type="ChEBI" id="CHEBI:18420"/>
        <label>2</label>
        <note>catalytic</note>
    </ligand>
</feature>
<feature type="binding site">
    <location>
        <position position="228"/>
    </location>
    <ligand>
        <name>ATP</name>
        <dbReference type="ChEBI" id="CHEBI:30616"/>
    </ligand>
</feature>
<feature type="binding site">
    <location>
        <position position="237"/>
    </location>
    <ligand>
        <name>ATP</name>
        <dbReference type="ChEBI" id="CHEBI:30616"/>
    </ligand>
</feature>
<feature type="binding site">
    <location>
        <begin position="246"/>
        <end position="247"/>
    </location>
    <ligand>
        <name>ATP</name>
        <dbReference type="ChEBI" id="CHEBI:30616"/>
    </ligand>
</feature>
<feature type="site" description="Interaction with RNA" evidence="1">
    <location>
        <position position="153"/>
    </location>
</feature>
<feature type="site" description="Interaction with RNA" evidence="1">
    <location>
        <position position="158"/>
    </location>
</feature>
<feature type="site" description="Interaction with RNA" evidence="1">
    <location>
        <position position="328"/>
    </location>
</feature>
<feature type="site" description="Interaction with RNA" evidence="1">
    <location>
        <position position="399"/>
    </location>
</feature>
<feature type="site" description="Interaction with RNA" evidence="1">
    <location>
        <position position="524"/>
    </location>
</feature>
<feature type="modified residue" description="Phosphoserine" evidence="2">
    <location>
        <position position="10"/>
    </location>
</feature>
<feature type="modified residue" description="Phosphoserine" evidence="2">
    <location>
        <position position="24"/>
    </location>
</feature>
<feature type="modified residue" description="Phosphoserine; by MAPK" evidence="3">
    <location>
        <position position="537"/>
    </location>
</feature>
<feature type="modified residue" description="Phosphoserine" evidence="2">
    <location>
        <position position="558"/>
    </location>
</feature>
<feature type="modified residue" description="N6-acetyllysine" evidence="7">
    <location>
        <position position="635"/>
    </location>
</feature>
<feature type="modified residue" description="N6-acetyllysine" evidence="7">
    <location>
        <position position="644"/>
    </location>
</feature>
<feature type="modified residue" description="N6-acetyllysine; alternate" evidence="7">
    <location>
        <position position="730"/>
    </location>
</feature>
<feature type="modified residue" description="Phosphoserine" evidence="2">
    <location>
        <position position="732"/>
    </location>
</feature>
<feature type="modified residue" description="N6-acetyllysine; alternate" evidence="7">
    <location>
        <position position="734"/>
    </location>
</feature>
<feature type="cross-link" description="Glycyl lysine isopeptide (Lys-Gly) (interchain with G-Cter in SUMO)" evidence="11">
    <location>
        <position position="444"/>
    </location>
</feature>
<feature type="cross-link" description="Glycyl lysine isopeptide (Lys-Gly) (interchain with G-Cter in SUMO)" evidence="11">
    <location>
        <position position="445"/>
    </location>
</feature>
<feature type="cross-link" description="Glycyl lysine isopeptide (Lys-Gly) (interchain with G-Cter in SUMO)" evidence="11">
    <location>
        <position position="506"/>
    </location>
</feature>
<feature type="cross-link" description="Glycyl lysine isopeptide (Lys-Gly) (interchain with G-Cter in SUMO)" evidence="11">
    <location>
        <position position="507"/>
    </location>
</feature>
<feature type="cross-link" description="Glycyl lysine isopeptide (Lys-Gly) (interchain with G-Cter in SUMO); alternate" evidence="1">
    <location>
        <position position="730"/>
    </location>
</feature>
<feature type="cross-link" description="Glycyl lysine isopeptide (Lys-Gly) (interchain with G-Cter in SUMO); alternate" evidence="1">
    <location>
        <position position="734"/>
    </location>
</feature>
<feature type="splice variant" id="VSP_004524" description="In isoform Short." evidence="10">
    <location>
        <begin position="663"/>
        <end position="683"/>
    </location>
</feature>
<feature type="splice variant" id="VSP_004525" description="In isoform Short." evidence="10">
    <original>KT</original>
    <variation>II</variation>
    <location>
        <begin position="709"/>
        <end position="710"/>
    </location>
</feature>
<feature type="splice variant" id="VSP_004526" description="In isoform Short." evidence="10">
    <location>
        <begin position="711"/>
        <end position="739"/>
    </location>
</feature>
<feature type="mutagenesis site" description="Strongly decreased enzyme activity. Strongly reduced affinity for RNA." evidence="6">
    <original>F</original>
    <variation>D</variation>
    <location>
        <position position="100"/>
    </location>
</feature>
<feature type="mutagenesis site" description="Abolishes most of the specific and non-specific polyadenylation activity.">
    <original>DID</original>
    <variation>AIA</variation>
    <location>
        <begin position="113"/>
        <end position="115"/>
    </location>
</feature>
<feature type="mutagenesis site" description="Abolishes most of the specific and non-specific polyadenylation activity." evidence="8">
    <original>D</original>
    <variation>H</variation>
    <location>
        <position position="113"/>
    </location>
</feature>
<feature type="mutagenesis site" description="Abolishes most of the specific and non-specific polyadenylation activity." evidence="8">
    <original>D</original>
    <variation>H</variation>
    <location>
        <position position="115"/>
    </location>
</feature>
<feature type="mutagenesis site" description="Strongly reduced affinity for RNA." evidence="6">
    <original>F</original>
    <variation>A</variation>
    <location>
        <position position="153"/>
    </location>
</feature>
<feature type="mutagenesis site" description="Strongly decreased enzyme activity. Strongly reduced affinity for RNA." evidence="6">
    <original>V</original>
    <variation>A</variation>
    <location>
        <position position="156"/>
    </location>
</feature>
<feature type="mutagenesis site" description="Small decrease in non-specific and specific polyadenylation activity." evidence="8">
    <original>DG</original>
    <variation>HA</variation>
    <location>
        <begin position="162"/>
        <end position="163"/>
    </location>
</feature>
<feature type="mutagenesis site" description="Loss of enzyme activity." evidence="6 8">
    <original>D</original>
    <variation>A</variation>
    <location>
        <position position="167"/>
    </location>
</feature>
<feature type="mutagenesis site" description="Abolishes most of the specific and non-specific polyadenylation activity." evidence="6 8">
    <original>D</original>
    <variation>H</variation>
    <location>
        <position position="167"/>
    </location>
</feature>
<feature type="mutagenesis site" description="Strongly decreased enzyme activity. Strongly reduced affinity for RNA." evidence="6 8">
    <original>D</original>
    <variation>N</variation>
    <location>
        <position position="167"/>
    </location>
</feature>
<feature type="mutagenesis site" description="Small decrease in non-specific and specific polyadenylation activity." evidence="8">
    <original>D</original>
    <variation>H</variation>
    <location>
        <position position="186"/>
    </location>
</feature>
<feature type="mutagenesis site" description="No change in non-specific and specific polyadenylation activity." evidence="8">
    <original>D</original>
    <variation>H</variation>
    <location>
        <position position="194"/>
    </location>
</feature>
<feature type="mutagenesis site" description="Strongly reduced affinity for RNA." evidence="6">
    <original>R</original>
    <variation>A</variation>
    <location>
        <position position="199"/>
    </location>
</feature>
<feature type="mutagenesis site" description="Strongly decreased enzyme activity. Strongly reduced affinity for RNA." evidence="6">
    <original>N</original>
    <variation>A</variation>
    <location>
        <position position="202"/>
    </location>
</feature>
<feature type="mutagenesis site" description="Loss of enzyme activity. Strongly reduced affinity for RNA." evidence="6">
    <original>G</original>
    <variation>H</variation>
    <location>
        <position position="203"/>
    </location>
</feature>
<feature type="mutagenesis site" description="Reduces by 60% non-specific and specific polyadenylation activity.">
    <original>DE</original>
    <variation>AA</variation>
    <location>
        <begin position="208"/>
        <end position="209"/>
    </location>
</feature>
<feature type="mutagenesis site" description="Reduces by 60% non-specific rf and specific polyadenylation activity." evidence="8">
    <original>D</original>
    <variation>A</variation>
    <location>
        <position position="208"/>
    </location>
</feature>
<feature type="mutagenesis site" description="Reduces by 20% non-specific and specific polyadenylation activity." evidence="8">
    <original>D</original>
    <variation>H</variation>
    <location>
        <position position="208"/>
    </location>
</feature>
<feature type="mutagenesis site" description="No change in non-specific and specific polyadenylation activity." evidence="8">
    <original>E</original>
    <variation>A</variation>
    <location>
        <position position="209"/>
    </location>
</feature>
<feature type="mutagenesis site" description="Strongly decreased affinity for ATP." evidence="6">
    <original>K</original>
    <variation>A</variation>
    <location>
        <position position="228"/>
    </location>
</feature>
<feature type="mutagenesis site" description="Decreased affinity for ATP." evidence="6">
    <original>K</original>
    <variation>A</variation>
    <location>
        <position position="232"/>
    </location>
</feature>
<feature type="mutagenesis site" description="Strongly decreased affinity for ATP." evidence="6">
    <original>Y</original>
    <variation>A</variation>
    <location>
        <position position="237"/>
    </location>
</feature>
<feature type="mutagenesis site" description="Strongly reduced affinity for RNA." evidence="6">
    <original>V</original>
    <variation>A</variation>
    <variation>R</variation>
    <location>
        <position position="247"/>
    </location>
</feature>
<feature type="mutagenesis site" description="Abolishes most of non-specific polyadenylation activity.">
    <original>EE</original>
    <variation>AA</variation>
    <location>
        <begin position="291"/>
        <end position="292"/>
    </location>
</feature>
<feature type="mutagenesis site" description="Reduces by 60% non-specific polyadenylation activity." evidence="8">
    <original>E</original>
    <variation>A</variation>
    <location>
        <position position="291"/>
    </location>
</feature>
<feature type="mutagenesis site" description="No change in non-specific polyadenylation activity." evidence="8">
    <original>E</original>
    <variation>A</variation>
    <location>
        <position position="292"/>
    </location>
</feature>
<feature type="mutagenesis site" description="No change in non-specific and specific polyadenylation activity.">
    <original>D</original>
    <variation>A</variation>
    <location>
        <position position="308"/>
    </location>
</feature>
<feature type="mutagenesis site" description="Strongly decreased affinity for ATP.">
    <original>T</original>
    <variation>G</variation>
    <location>
        <position position="317"/>
    </location>
</feature>
<feature type="mutagenesis site" description="No change in non-specific and specific polyadenylation activity." evidence="8">
    <original>EE</original>
    <variation>AA</variation>
    <location>
        <begin position="431"/>
        <end position="432"/>
    </location>
</feature>
<feature type="mutagenesis site" description="Reduces by 30% non-specific polyadenylation activity." evidence="8">
    <original>D</original>
    <variation>A</variation>
    <location>
        <position position="455"/>
    </location>
</feature>
<feature type="mutagenesis site" description="No change in non-specific polyadenylation activity." evidence="8">
    <original>D</original>
    <variation>A</variation>
    <location>
        <position position="459"/>
    </location>
</feature>
<feature type="mutagenesis site" description="No change in non-specific and specific polyadenylation activity." evidence="8">
    <original>D</original>
    <variation>A</variation>
    <location>
        <position position="465"/>
    </location>
</feature>
<feature type="mutagenesis site" description="Weak binding to KPBN1. Cytoplasmic location; when associated with Q-644; Q-730 and Q-734." evidence="7">
    <original>K</original>
    <variation>Q</variation>
    <location>
        <position position="635"/>
    </location>
</feature>
<feature type="mutagenesis site" description="Some decrease in acetylation. Binds KPBN1 and localizes to the nucleus; when associated with R-644; R-730 and R-734." evidence="7">
    <original>K</original>
    <variation>R</variation>
    <location>
        <position position="635"/>
    </location>
</feature>
<feature type="mutagenesis site" description="Weak binding to KPBN1. Cytoplasmic location; when associated with Q-635; Q-730 and Q-734." evidence="7">
    <original>K</original>
    <variation>Q</variation>
    <location>
        <position position="644"/>
    </location>
</feature>
<feature type="mutagenesis site" description="Large decrease in acetylation. Binds KPBN1 and localizes to the nucleus; when associated with R-635; R-730 and R-734." evidence="7">
    <original>K</original>
    <variation>R</variation>
    <location>
        <position position="644"/>
    </location>
</feature>
<feature type="mutagenesis site" description="Weak binding to KPBN1. Cytoplasmic location; when associated with Q-635; Q-644 and Q-734." evidence="7">
    <original>K</original>
    <variation>Q</variation>
    <location>
        <position position="730"/>
    </location>
</feature>
<feature type="mutagenesis site" description="Some decrease in acetylation. Binds KPBN1 and localizes to the nucleus; when associated with R-635; R-644 and R-734." evidence="7">
    <original>K</original>
    <variation>R</variation>
    <location>
        <position position="730"/>
    </location>
</feature>
<feature type="mutagenesis site" description="Weak binding to KPBN1. Cytoplasmic location; when associated with Q-635; Q-644 and Q-730." evidence="7">
    <original>K</original>
    <variation>Q</variation>
    <location>
        <position position="734"/>
    </location>
</feature>
<feature type="mutagenesis site" description="Some decrease in acetylation. Binds KPBN1 and localizes to the nucleus; when associated with R-635; R-644 and R-730." evidence="7">
    <original>K</original>
    <variation>R</variation>
    <location>
        <position position="734"/>
    </location>
</feature>
<feature type="sequence conflict" description="In Ref. 3; CAA45031." evidence="11" ref="3">
    <original>S</original>
    <variation>R</variation>
    <location>
        <position position="80"/>
    </location>
</feature>
<feature type="strand" evidence="13">
    <location>
        <begin position="21"/>
        <end position="23"/>
    </location>
</feature>
<feature type="helix" evidence="13">
    <location>
        <begin position="33"/>
        <end position="46"/>
    </location>
</feature>
<feature type="helix" evidence="13">
    <location>
        <begin position="47"/>
        <end position="49"/>
    </location>
</feature>
<feature type="helix" evidence="13">
    <location>
        <begin position="55"/>
        <end position="82"/>
    </location>
</feature>
<feature type="helix" evidence="13">
    <location>
        <begin position="87"/>
        <end position="90"/>
    </location>
</feature>
<feature type="strand" evidence="13">
    <location>
        <begin position="96"/>
        <end position="100"/>
    </location>
</feature>
<feature type="helix" evidence="13">
    <location>
        <begin position="101"/>
        <end position="105"/>
    </location>
</feature>
<feature type="strand" evidence="13">
    <location>
        <begin position="114"/>
        <end position="120"/>
    </location>
</feature>
<feature type="helix" evidence="13">
    <location>
        <begin position="126"/>
        <end position="129"/>
    </location>
</feature>
<feature type="helix" evidence="13">
    <location>
        <begin position="132"/>
        <end position="138"/>
    </location>
</feature>
<feature type="strand" evidence="13">
    <location>
        <begin position="143"/>
        <end position="149"/>
    </location>
</feature>
<feature type="strand" evidence="13">
    <location>
        <begin position="152"/>
        <end position="154"/>
    </location>
</feature>
<feature type="strand" evidence="13">
    <location>
        <begin position="156"/>
        <end position="161"/>
    </location>
</feature>
<feature type="strand" evidence="13">
    <location>
        <begin position="164"/>
        <end position="172"/>
    </location>
</feature>
<feature type="strand" evidence="13">
    <location>
        <begin position="176"/>
        <end position="178"/>
    </location>
</feature>
<feature type="helix" evidence="13">
    <location>
        <begin position="187"/>
        <end position="190"/>
    </location>
</feature>
<feature type="helix" evidence="13">
    <location>
        <begin position="195"/>
        <end position="211"/>
    </location>
</feature>
<feature type="strand" evidence="13">
    <location>
        <begin position="213"/>
        <end position="215"/>
    </location>
</feature>
<feature type="helix" evidence="13">
    <location>
        <begin position="217"/>
        <end position="233"/>
    </location>
</feature>
<feature type="turn" evidence="13">
    <location>
        <begin position="239"/>
        <end position="242"/>
    </location>
</feature>
<feature type="helix" evidence="13">
    <location>
        <begin position="246"/>
        <end position="259"/>
    </location>
</feature>
<feature type="helix" evidence="13">
    <location>
        <begin position="265"/>
        <end position="277"/>
    </location>
</feature>
<feature type="turn" evidence="13">
    <location>
        <begin position="302"/>
        <end position="304"/>
    </location>
</feature>
<feature type="helix" evidence="13">
    <location>
        <begin position="306"/>
        <end position="310"/>
    </location>
</feature>
<feature type="strand" evidence="13">
    <location>
        <begin position="318"/>
        <end position="321"/>
    </location>
</feature>
<feature type="turn" evidence="13">
    <location>
        <begin position="325"/>
        <end position="328"/>
    </location>
</feature>
<feature type="helix" evidence="13">
    <location>
        <begin position="331"/>
        <end position="352"/>
    </location>
</feature>
<feature type="helix" evidence="13">
    <location>
        <begin position="358"/>
        <end position="361"/>
    </location>
</feature>
<feature type="helix" evidence="13">
    <location>
        <begin position="367"/>
        <end position="370"/>
    </location>
</feature>
<feature type="strand" evidence="13">
    <location>
        <begin position="372"/>
        <end position="383"/>
    </location>
</feature>
<feature type="helix" evidence="13">
    <location>
        <begin position="384"/>
        <end position="395"/>
    </location>
</feature>
<feature type="helix" evidence="13">
    <location>
        <begin position="398"/>
        <end position="406"/>
    </location>
</feature>
<feature type="strand" evidence="13">
    <location>
        <begin position="411"/>
        <end position="416"/>
    </location>
</feature>
<feature type="strand" evidence="12">
    <location>
        <begin position="428"/>
        <end position="430"/>
    </location>
</feature>
<feature type="strand" evidence="13">
    <location>
        <begin position="433"/>
        <end position="443"/>
    </location>
</feature>
<feature type="helix" evidence="13">
    <location>
        <begin position="457"/>
        <end position="473"/>
    </location>
</feature>
<feature type="strand" evidence="13">
    <location>
        <begin position="482"/>
        <end position="489"/>
    </location>
</feature>
<feature type="helix" evidence="13">
    <location>
        <begin position="490"/>
        <end position="493"/>
    </location>
</feature>
<feature type="helix" evidence="13">
    <location>
        <begin position="494"/>
        <end position="496"/>
    </location>
</feature>
<evidence type="ECO:0000250" key="1"/>
<evidence type="ECO:0000250" key="2">
    <source>
        <dbReference type="UniProtKB" id="P51003"/>
    </source>
</evidence>
<evidence type="ECO:0000250" key="3">
    <source>
        <dbReference type="UniProtKB" id="Q61183"/>
    </source>
</evidence>
<evidence type="ECO:0000256" key="4">
    <source>
        <dbReference type="SAM" id="MobiDB-lite"/>
    </source>
</evidence>
<evidence type="ECO:0000269" key="5">
    <source>
    </source>
</evidence>
<evidence type="ECO:0000269" key="6">
    <source>
    </source>
</evidence>
<evidence type="ECO:0000269" key="7">
    <source>
    </source>
</evidence>
<evidence type="ECO:0000269" key="8">
    <source>
    </source>
</evidence>
<evidence type="ECO:0000269" key="9">
    <source>
    </source>
</evidence>
<evidence type="ECO:0000303" key="10">
    <source>
    </source>
</evidence>
<evidence type="ECO:0000305" key="11"/>
<evidence type="ECO:0007829" key="12">
    <source>
        <dbReference type="PDB" id="1Q78"/>
    </source>
</evidence>
<evidence type="ECO:0007829" key="13">
    <source>
        <dbReference type="PDB" id="1Q79"/>
    </source>
</evidence>
<keyword id="KW-0002">3D-structure</keyword>
<keyword id="KW-0007">Acetylation</keyword>
<keyword id="KW-0025">Alternative splicing</keyword>
<keyword id="KW-0067">ATP-binding</keyword>
<keyword id="KW-0903">Direct protein sequencing</keyword>
<keyword id="KW-1017">Isopeptide bond</keyword>
<keyword id="KW-0460">Magnesium</keyword>
<keyword id="KW-0464">Manganese</keyword>
<keyword id="KW-0479">Metal-binding</keyword>
<keyword id="KW-0507">mRNA processing</keyword>
<keyword id="KW-0547">Nucleotide-binding</keyword>
<keyword id="KW-0539">Nucleus</keyword>
<keyword id="KW-0597">Phosphoprotein</keyword>
<keyword id="KW-1185">Reference proteome</keyword>
<keyword id="KW-0694">RNA-binding</keyword>
<keyword id="KW-0808">Transferase</keyword>
<keyword id="KW-0832">Ubl conjugation</keyword>